<proteinExistence type="inferred from homology"/>
<reference key="1">
    <citation type="journal article" date="2010" name="Genome Biol. Evol.">
        <title>Continuing evolution of Burkholderia mallei through genome reduction and large-scale rearrangements.</title>
        <authorList>
            <person name="Losada L."/>
            <person name="Ronning C.M."/>
            <person name="DeShazer D."/>
            <person name="Woods D."/>
            <person name="Fedorova N."/>
            <person name="Kim H.S."/>
            <person name="Shabalina S.A."/>
            <person name="Pearson T.R."/>
            <person name="Brinkac L."/>
            <person name="Tan P."/>
            <person name="Nandi T."/>
            <person name="Crabtree J."/>
            <person name="Badger J."/>
            <person name="Beckstrom-Sternberg S."/>
            <person name="Saqib M."/>
            <person name="Schutzer S.E."/>
            <person name="Keim P."/>
            <person name="Nierman W.C."/>
        </authorList>
    </citation>
    <scope>NUCLEOTIDE SEQUENCE [LARGE SCALE GENOMIC DNA]</scope>
    <source>
        <strain>SAVP1</strain>
    </source>
</reference>
<keyword id="KW-0028">Amino-acid biosynthesis</keyword>
<keyword id="KW-0067">ATP-binding</keyword>
<keyword id="KW-0963">Cytoplasm</keyword>
<keyword id="KW-0328">Glycosyltransferase</keyword>
<keyword id="KW-0368">Histidine biosynthesis</keyword>
<keyword id="KW-0547">Nucleotide-binding</keyword>
<keyword id="KW-0808">Transferase</keyword>
<organism>
    <name type="scientific">Burkholderia mallei (strain SAVP1)</name>
    <dbReference type="NCBI Taxonomy" id="320388"/>
    <lineage>
        <taxon>Bacteria</taxon>
        <taxon>Pseudomonadati</taxon>
        <taxon>Pseudomonadota</taxon>
        <taxon>Betaproteobacteria</taxon>
        <taxon>Burkholderiales</taxon>
        <taxon>Burkholderiaceae</taxon>
        <taxon>Burkholderia</taxon>
        <taxon>pseudomallei group</taxon>
    </lineage>
</organism>
<evidence type="ECO:0000255" key="1">
    <source>
        <dbReference type="HAMAP-Rule" id="MF_01018"/>
    </source>
</evidence>
<accession>A1V8G8</accession>
<name>HIS1_BURMS</name>
<dbReference type="EC" id="2.4.2.17" evidence="1"/>
<dbReference type="EMBL" id="CP000526">
    <property type="protein sequence ID" value="ABM51591.1"/>
    <property type="molecule type" value="Genomic_DNA"/>
</dbReference>
<dbReference type="RefSeq" id="WP_004199915.1">
    <property type="nucleotide sequence ID" value="NC_008785.1"/>
</dbReference>
<dbReference type="SMR" id="A1V8G8"/>
<dbReference type="GeneID" id="93061757"/>
<dbReference type="KEGG" id="bmv:BMASAVP1_A3238"/>
<dbReference type="HOGENOM" id="CLU_038115_2_0_4"/>
<dbReference type="UniPathway" id="UPA00031">
    <property type="reaction ID" value="UER00006"/>
</dbReference>
<dbReference type="GO" id="GO:0005737">
    <property type="term" value="C:cytoplasm"/>
    <property type="evidence" value="ECO:0007669"/>
    <property type="project" value="UniProtKB-SubCell"/>
</dbReference>
<dbReference type="GO" id="GO:0005524">
    <property type="term" value="F:ATP binding"/>
    <property type="evidence" value="ECO:0007669"/>
    <property type="project" value="UniProtKB-KW"/>
</dbReference>
<dbReference type="GO" id="GO:0003879">
    <property type="term" value="F:ATP phosphoribosyltransferase activity"/>
    <property type="evidence" value="ECO:0007669"/>
    <property type="project" value="UniProtKB-UniRule"/>
</dbReference>
<dbReference type="GO" id="GO:0000105">
    <property type="term" value="P:L-histidine biosynthetic process"/>
    <property type="evidence" value="ECO:0007669"/>
    <property type="project" value="UniProtKB-UniRule"/>
</dbReference>
<dbReference type="CDD" id="cd13595">
    <property type="entry name" value="PBP2_HisGs"/>
    <property type="match status" value="1"/>
</dbReference>
<dbReference type="FunFam" id="3.40.190.10:FF:000011">
    <property type="entry name" value="ATP phosphoribosyltransferase"/>
    <property type="match status" value="1"/>
</dbReference>
<dbReference type="Gene3D" id="3.40.190.10">
    <property type="entry name" value="Periplasmic binding protein-like II"/>
    <property type="match status" value="2"/>
</dbReference>
<dbReference type="HAMAP" id="MF_01018">
    <property type="entry name" value="HisG_Short"/>
    <property type="match status" value="1"/>
</dbReference>
<dbReference type="InterPro" id="IPR013820">
    <property type="entry name" value="ATP_PRibTrfase_cat"/>
</dbReference>
<dbReference type="InterPro" id="IPR018198">
    <property type="entry name" value="ATP_PRibTrfase_CS"/>
</dbReference>
<dbReference type="InterPro" id="IPR001348">
    <property type="entry name" value="ATP_PRibTrfase_HisG"/>
</dbReference>
<dbReference type="InterPro" id="IPR024893">
    <property type="entry name" value="ATP_PRibTrfase_HisG_short"/>
</dbReference>
<dbReference type="NCBIfam" id="TIGR00070">
    <property type="entry name" value="hisG"/>
    <property type="match status" value="1"/>
</dbReference>
<dbReference type="PANTHER" id="PTHR21403:SF8">
    <property type="entry name" value="ATP PHOSPHORIBOSYLTRANSFERASE"/>
    <property type="match status" value="1"/>
</dbReference>
<dbReference type="PANTHER" id="PTHR21403">
    <property type="entry name" value="ATP PHOSPHORIBOSYLTRANSFERASE ATP-PRTASE"/>
    <property type="match status" value="1"/>
</dbReference>
<dbReference type="Pfam" id="PF01634">
    <property type="entry name" value="HisG"/>
    <property type="match status" value="1"/>
</dbReference>
<dbReference type="SUPFAM" id="SSF53850">
    <property type="entry name" value="Periplasmic binding protein-like II"/>
    <property type="match status" value="1"/>
</dbReference>
<dbReference type="PROSITE" id="PS01316">
    <property type="entry name" value="ATP_P_PHORIBOSYLTR"/>
    <property type="match status" value="1"/>
</dbReference>
<feature type="chain" id="PRO_1000063272" description="ATP phosphoribosyltransferase">
    <location>
        <begin position="1"/>
        <end position="218"/>
    </location>
</feature>
<sequence>MSAPLTLALSKGRIFEETVPLLAAAGVTVAEDPETSRKLILPTTDPNLRVIVVRATDVPTYVEYGAADFGVAGKDVLLEHGGGGLYQPIDLNIARCRMSVAVPAGFDYANAVRQGARLRVATKYVETAREHFAAKGVHVDLIKLYGSMELAPLVGLADAIVDLVSSGGTLKANNLVEVEEIMPISSRLVVNQAALKLKRAALKPFLDAFERASLGSGA</sequence>
<protein>
    <recommendedName>
        <fullName evidence="1">ATP phosphoribosyltransferase</fullName>
        <shortName evidence="1">ATP-PRT</shortName>
        <shortName evidence="1">ATP-PRTase</shortName>
        <ecNumber evidence="1">2.4.2.17</ecNumber>
    </recommendedName>
</protein>
<comment type="function">
    <text evidence="1">Catalyzes the condensation of ATP and 5-phosphoribose 1-diphosphate to form N'-(5'-phosphoribosyl)-ATP (PR-ATP). Has a crucial role in the pathway because the rate of histidine biosynthesis seems to be controlled primarily by regulation of HisG enzymatic activity.</text>
</comment>
<comment type="catalytic activity">
    <reaction evidence="1">
        <text>1-(5-phospho-beta-D-ribosyl)-ATP + diphosphate = 5-phospho-alpha-D-ribose 1-diphosphate + ATP</text>
        <dbReference type="Rhea" id="RHEA:18473"/>
        <dbReference type="ChEBI" id="CHEBI:30616"/>
        <dbReference type="ChEBI" id="CHEBI:33019"/>
        <dbReference type="ChEBI" id="CHEBI:58017"/>
        <dbReference type="ChEBI" id="CHEBI:73183"/>
        <dbReference type="EC" id="2.4.2.17"/>
    </reaction>
</comment>
<comment type="pathway">
    <text evidence="1">Amino-acid biosynthesis; L-histidine biosynthesis; L-histidine from 5-phospho-alpha-D-ribose 1-diphosphate: step 1/9.</text>
</comment>
<comment type="subunit">
    <text evidence="1">Heteromultimer composed of HisG and HisZ subunits.</text>
</comment>
<comment type="subcellular location">
    <subcellularLocation>
        <location evidence="1">Cytoplasm</location>
    </subcellularLocation>
</comment>
<comment type="domain">
    <text>Lacks the C-terminal regulatory region which is replaced by HisZ.</text>
</comment>
<comment type="similarity">
    <text evidence="1">Belongs to the ATP phosphoribosyltransferase family. Short subfamily.</text>
</comment>
<gene>
    <name evidence="1" type="primary">hisG</name>
    <name type="ordered locus">BMASAVP1_A3238</name>
</gene>